<dbReference type="EMBL" id="AP008957">
    <property type="protein sequence ID" value="BAH33876.1"/>
    <property type="molecule type" value="Genomic_DNA"/>
</dbReference>
<dbReference type="RefSeq" id="WP_003944836.1">
    <property type="nucleotide sequence ID" value="NC_012490.1"/>
</dbReference>
<dbReference type="SMR" id="C0ZZU1"/>
<dbReference type="GeneID" id="93806148"/>
<dbReference type="KEGG" id="rer:RER_31680"/>
<dbReference type="eggNOG" id="COG1826">
    <property type="taxonomic scope" value="Bacteria"/>
</dbReference>
<dbReference type="HOGENOM" id="CLU_086034_4_0_11"/>
<dbReference type="Proteomes" id="UP000002204">
    <property type="component" value="Chromosome"/>
</dbReference>
<dbReference type="GO" id="GO:0033281">
    <property type="term" value="C:TAT protein transport complex"/>
    <property type="evidence" value="ECO:0007669"/>
    <property type="project" value="UniProtKB-UniRule"/>
</dbReference>
<dbReference type="GO" id="GO:0008320">
    <property type="term" value="F:protein transmembrane transporter activity"/>
    <property type="evidence" value="ECO:0007669"/>
    <property type="project" value="UniProtKB-UniRule"/>
</dbReference>
<dbReference type="GO" id="GO:0043953">
    <property type="term" value="P:protein transport by the Tat complex"/>
    <property type="evidence" value="ECO:0007669"/>
    <property type="project" value="UniProtKB-UniRule"/>
</dbReference>
<dbReference type="Gene3D" id="1.20.5.3310">
    <property type="match status" value="1"/>
</dbReference>
<dbReference type="HAMAP" id="MF_00236">
    <property type="entry name" value="TatA_E"/>
    <property type="match status" value="1"/>
</dbReference>
<dbReference type="InterPro" id="IPR003369">
    <property type="entry name" value="TatA/B/E"/>
</dbReference>
<dbReference type="InterPro" id="IPR006312">
    <property type="entry name" value="TatA/E"/>
</dbReference>
<dbReference type="NCBIfam" id="NF001854">
    <property type="entry name" value="PRK00575.1"/>
    <property type="match status" value="1"/>
</dbReference>
<dbReference type="NCBIfam" id="TIGR01411">
    <property type="entry name" value="tatAE"/>
    <property type="match status" value="1"/>
</dbReference>
<dbReference type="PANTHER" id="PTHR42982">
    <property type="entry name" value="SEC-INDEPENDENT PROTEIN TRANSLOCASE PROTEIN TATA"/>
    <property type="match status" value="1"/>
</dbReference>
<dbReference type="PANTHER" id="PTHR42982:SF8">
    <property type="entry name" value="SEC-INDEPENDENT PROTEIN TRANSLOCASE PROTEIN TATA"/>
    <property type="match status" value="1"/>
</dbReference>
<dbReference type="Pfam" id="PF02416">
    <property type="entry name" value="TatA_B_E"/>
    <property type="match status" value="1"/>
</dbReference>
<sequence>MGAMQPMHWLIVAVVVVILFGSKKLPDAARGLGRSLRIFKSEVKEMQNDDAAPASAPVAQPAPAQLPTANTAVVANGAAAPVAQPTEVKPL</sequence>
<feature type="chain" id="PRO_1000204441" description="Sec-independent protein translocase protein TatA">
    <location>
        <begin position="1"/>
        <end position="91"/>
    </location>
</feature>
<feature type="transmembrane region" description="Helical" evidence="1">
    <location>
        <begin position="1"/>
        <end position="21"/>
    </location>
</feature>
<accession>C0ZZU1</accession>
<keyword id="KW-1003">Cell membrane</keyword>
<keyword id="KW-0472">Membrane</keyword>
<keyword id="KW-0653">Protein transport</keyword>
<keyword id="KW-0811">Translocation</keyword>
<keyword id="KW-0812">Transmembrane</keyword>
<keyword id="KW-1133">Transmembrane helix</keyword>
<keyword id="KW-0813">Transport</keyword>
<reference key="1">
    <citation type="submission" date="2005-03" db="EMBL/GenBank/DDBJ databases">
        <title>Comparison of the complete genome sequences of Rhodococcus erythropolis PR4 and Rhodococcus opacus B4.</title>
        <authorList>
            <person name="Takarada H."/>
            <person name="Sekine M."/>
            <person name="Hosoyama A."/>
            <person name="Yamada R."/>
            <person name="Fujisawa T."/>
            <person name="Omata S."/>
            <person name="Shimizu A."/>
            <person name="Tsukatani N."/>
            <person name="Tanikawa S."/>
            <person name="Fujita N."/>
            <person name="Harayama S."/>
        </authorList>
    </citation>
    <scope>NUCLEOTIDE SEQUENCE [LARGE SCALE GENOMIC DNA]</scope>
    <source>
        <strain>PR4 / NBRC 100887</strain>
    </source>
</reference>
<comment type="function">
    <text evidence="1">Part of the twin-arginine translocation (Tat) system that transports large folded proteins containing a characteristic twin-arginine motif in their signal peptide across membranes. TatA could form the protein-conducting channel of the Tat system.</text>
</comment>
<comment type="subunit">
    <text evidence="1">The Tat system comprises two distinct complexes: a TatABC complex, containing multiple copies of TatA, TatB and TatC subunits, and a separate TatA complex, containing only TatA subunits. Substrates initially bind to the TatABC complex, which probably triggers association of the separate TatA complex to form the active translocon.</text>
</comment>
<comment type="subcellular location">
    <subcellularLocation>
        <location evidence="1">Cell membrane</location>
        <topology evidence="1">Single-pass membrane protein</topology>
    </subcellularLocation>
</comment>
<comment type="similarity">
    <text evidence="1">Belongs to the TatA/E family.</text>
</comment>
<evidence type="ECO:0000255" key="1">
    <source>
        <dbReference type="HAMAP-Rule" id="MF_00236"/>
    </source>
</evidence>
<proteinExistence type="inferred from homology"/>
<gene>
    <name evidence="1" type="primary">tatA</name>
    <name type="ordered locus">RER_31680</name>
</gene>
<organism>
    <name type="scientific">Rhodococcus erythropolis (strain PR4 / NBRC 100887)</name>
    <dbReference type="NCBI Taxonomy" id="234621"/>
    <lineage>
        <taxon>Bacteria</taxon>
        <taxon>Bacillati</taxon>
        <taxon>Actinomycetota</taxon>
        <taxon>Actinomycetes</taxon>
        <taxon>Mycobacteriales</taxon>
        <taxon>Nocardiaceae</taxon>
        <taxon>Rhodococcus</taxon>
        <taxon>Rhodococcus erythropolis group</taxon>
    </lineage>
</organism>
<protein>
    <recommendedName>
        <fullName evidence="1">Sec-independent protein translocase protein TatA</fullName>
    </recommendedName>
</protein>
<name>TATA_RHOE4</name>